<keyword id="KW-0067">ATP-binding</keyword>
<keyword id="KW-0963">Cytoplasm</keyword>
<keyword id="KW-0347">Helicase</keyword>
<keyword id="KW-0378">Hydrolase</keyword>
<keyword id="KW-0496">Mitochondrion</keyword>
<keyword id="KW-0547">Nucleotide-binding</keyword>
<keyword id="KW-0539">Nucleus</keyword>
<keyword id="KW-1185">Reference proteome</keyword>
<keyword id="KW-0677">Repeat</keyword>
<keyword id="KW-0694">RNA-binding</keyword>
<keyword id="KW-0698">rRNA processing</keyword>
<keyword id="KW-0804">Transcription</keyword>
<name>DD21A_XENLA</name>
<reference key="1">
    <citation type="journal article" date="2003" name="J. Biol. Chem.">
        <title>Down-regulation of RNA helicase II/Gu results in the depletion of 18 and 28 S rRNAs in Xenopus oocyte.</title>
        <authorList>
            <person name="Yang H."/>
            <person name="Zhou J."/>
            <person name="Ochs R.L."/>
            <person name="Henning D."/>
            <person name="Jin R."/>
            <person name="Valdez B.C."/>
        </authorList>
    </citation>
    <scope>NUCLEOTIDE SEQUENCE [MRNA]</scope>
    <scope>FUNCTION</scope>
    <scope>SUBCELLULAR LOCATION</scope>
    <scope>TISSUE SPECIFICITY</scope>
    <source>
        <tissue evidence="11">Liver</tissue>
    </source>
</reference>
<reference key="2">
    <citation type="submission" date="2004-06" db="EMBL/GenBank/DDBJ databases">
        <authorList>
            <consortium name="NIH - Xenopus Gene Collection (XGC) project"/>
        </authorList>
    </citation>
    <scope>NUCLEOTIDE SEQUENCE [LARGE SCALE MRNA] OF 31-759</scope>
    <source>
        <tissue evidence="12">Spleen</tissue>
    </source>
</reference>
<accession>Q9DF35</accession>
<accession>Q6GP16</accession>
<sequence>MPVKVYAEEMEGESMKKKKLSETPLPKIKKRKMKNGDTEDLDLEHMAESVNGEINNNNPTPKLKKKKKPAPISDLSETAEECDGEQPDPSTPTPKKVKKKKIKESKEDSDTQEEAEQSEPQTNGVKSVKKSKKNITSDDNEPAPKKRKTDTTEITTAKECEEKVLTKEEQDINQEKIDGDFSKFPLSKETIKNLQAKGVSYLFPIQSKTFHTAYSGKDVVVQARTGTGKTFSFAIPLVEKLNEDQQPLARGRAPRVIILTPTRELAIQITNEIRSITKKLKVSCFYGGTPYQQQVFAIKDGIDFLVGTPGRVRDLVQNYRLDLTTLKHVVLDEVDMMFDMGFSEQVEEILSVRYKADPEENPQTLLFSATCPDWMYNMAKKYMRKQFEKIDLIGHRSQKAATTVEHLAIECTRSQKAAVLGDLVQVYSGSHGKTIIFCDSKLEAHTLATSCGSLKQSAKSLHGDLQQKEREVVLKGFRQGTFEVLIATNVAARGLDIPEVDLVVLYSAPKEADAYVHRSGRTGRAGRTGVCISLYEPWERHYLRNVERSTGITFKRVGVPSLLNVAKSSSADAIKSLDTVPADVIEHFKEYAQELIEQKGALTAIAAALAHISGATSIKQRSLLNMEAGCDTITLKSSVPIHSLSYAWQSIKEQLGDDVDSKIHRMCLLKDSMGVCFDVRSENLESMQERWTDTKQWQFTVATELPAIQESERNFDGPRNRGFGGRGRRPFDRRNNSRNSNRGGGGRGRNRNGGFRRGR</sequence>
<dbReference type="EC" id="3.6.4.13" evidence="2"/>
<dbReference type="EMBL" id="AF302423">
    <property type="protein sequence ID" value="AAG22819.2"/>
    <property type="molecule type" value="mRNA"/>
</dbReference>
<dbReference type="EMBL" id="BC073332">
    <property type="protein sequence ID" value="AAH73332.1"/>
    <property type="status" value="ALT_INIT"/>
    <property type="molecule type" value="mRNA"/>
</dbReference>
<dbReference type="RefSeq" id="NP_001082035.1">
    <property type="nucleotide sequence ID" value="NM_001088566.1"/>
</dbReference>
<dbReference type="SMR" id="Q9DF35"/>
<dbReference type="REBASE" id="204842">
    <property type="entry name" value="Ppe194ORF77P"/>
</dbReference>
<dbReference type="DNASU" id="398189"/>
<dbReference type="GeneID" id="398189"/>
<dbReference type="KEGG" id="xla:398189"/>
<dbReference type="AGR" id="Xenbase:XB-GENE-17331446"/>
<dbReference type="CTD" id="398189"/>
<dbReference type="Xenbase" id="XB-GENE-17331446">
    <property type="gene designation" value="ddx21.S"/>
</dbReference>
<dbReference type="OrthoDB" id="4255at2759"/>
<dbReference type="Proteomes" id="UP000186698">
    <property type="component" value="Chromosome 7S"/>
</dbReference>
<dbReference type="Bgee" id="398189">
    <property type="expression patterns" value="Expressed in lung and 19 other cell types or tissues"/>
</dbReference>
<dbReference type="GO" id="GO:0005829">
    <property type="term" value="C:cytosol"/>
    <property type="evidence" value="ECO:0000250"/>
    <property type="project" value="UniProtKB"/>
</dbReference>
<dbReference type="GO" id="GO:0005739">
    <property type="term" value="C:mitochondrion"/>
    <property type="evidence" value="ECO:0007669"/>
    <property type="project" value="UniProtKB-SubCell"/>
</dbReference>
<dbReference type="GO" id="GO:0005730">
    <property type="term" value="C:nucleolus"/>
    <property type="evidence" value="ECO:0000314"/>
    <property type="project" value="UniProtKB"/>
</dbReference>
<dbReference type="GO" id="GO:0005654">
    <property type="term" value="C:nucleoplasm"/>
    <property type="evidence" value="ECO:0000250"/>
    <property type="project" value="UniProtKB"/>
</dbReference>
<dbReference type="GO" id="GO:0097322">
    <property type="term" value="F:7SK snRNA binding"/>
    <property type="evidence" value="ECO:0000250"/>
    <property type="project" value="UniProtKB"/>
</dbReference>
<dbReference type="GO" id="GO:0005524">
    <property type="term" value="F:ATP binding"/>
    <property type="evidence" value="ECO:0007669"/>
    <property type="project" value="UniProtKB-KW"/>
</dbReference>
<dbReference type="GO" id="GO:0016887">
    <property type="term" value="F:ATP hydrolysis activity"/>
    <property type="evidence" value="ECO:0007669"/>
    <property type="project" value="RHEA"/>
</dbReference>
<dbReference type="GO" id="GO:0003724">
    <property type="term" value="F:RNA helicase activity"/>
    <property type="evidence" value="ECO:0000250"/>
    <property type="project" value="UniProtKB"/>
</dbReference>
<dbReference type="GO" id="GO:0019843">
    <property type="term" value="F:rRNA binding"/>
    <property type="evidence" value="ECO:0000250"/>
    <property type="project" value="UniProtKB"/>
</dbReference>
<dbReference type="GO" id="GO:0030515">
    <property type="term" value="F:snoRNA binding"/>
    <property type="evidence" value="ECO:0000250"/>
    <property type="project" value="UniProtKB"/>
</dbReference>
<dbReference type="GO" id="GO:0062176">
    <property type="term" value="P:R-loop processing"/>
    <property type="evidence" value="ECO:0000250"/>
    <property type="project" value="UniProtKB"/>
</dbReference>
<dbReference type="GO" id="GO:0006364">
    <property type="term" value="P:rRNA processing"/>
    <property type="evidence" value="ECO:0000315"/>
    <property type="project" value="UniProtKB"/>
</dbReference>
<dbReference type="GO" id="GO:0006366">
    <property type="term" value="P:transcription by RNA polymerase II"/>
    <property type="evidence" value="ECO:0000250"/>
    <property type="project" value="UniProtKB"/>
</dbReference>
<dbReference type="CDD" id="cd17944">
    <property type="entry name" value="DEADc_DDX21_DDX50"/>
    <property type="match status" value="1"/>
</dbReference>
<dbReference type="CDD" id="cd12936">
    <property type="entry name" value="GUCT_RHII_Gualpha_beta"/>
    <property type="match status" value="1"/>
</dbReference>
<dbReference type="CDD" id="cd18787">
    <property type="entry name" value="SF2_C_DEAD"/>
    <property type="match status" value="1"/>
</dbReference>
<dbReference type="FunFam" id="3.30.70.2280:FF:000001">
    <property type="entry name" value="ATP-dependent RNA helicase DDX50"/>
    <property type="match status" value="1"/>
</dbReference>
<dbReference type="FunFam" id="3.40.50.300:FF:000666">
    <property type="entry name" value="ATP-dependent RNA helicase DDX50"/>
    <property type="match status" value="1"/>
</dbReference>
<dbReference type="FunFam" id="3.40.50.300:FF:001168">
    <property type="entry name" value="nucleolar RNA helicase 2"/>
    <property type="match status" value="1"/>
</dbReference>
<dbReference type="Gene3D" id="3.30.70.2280">
    <property type="match status" value="1"/>
</dbReference>
<dbReference type="Gene3D" id="3.40.50.300">
    <property type="entry name" value="P-loop containing nucleotide triphosphate hydrolases"/>
    <property type="match status" value="2"/>
</dbReference>
<dbReference type="InterPro" id="IPR011545">
    <property type="entry name" value="DEAD/DEAH_box_helicase_dom"/>
</dbReference>
<dbReference type="InterPro" id="IPR050079">
    <property type="entry name" value="DEAD_box_RNA_helicase"/>
</dbReference>
<dbReference type="InterPro" id="IPR012562">
    <property type="entry name" value="GUCT"/>
</dbReference>
<dbReference type="InterPro" id="IPR014001">
    <property type="entry name" value="Helicase_ATP-bd"/>
</dbReference>
<dbReference type="InterPro" id="IPR001650">
    <property type="entry name" value="Helicase_C-like"/>
</dbReference>
<dbReference type="InterPro" id="IPR027417">
    <property type="entry name" value="P-loop_NTPase"/>
</dbReference>
<dbReference type="InterPro" id="IPR035979">
    <property type="entry name" value="RBD_domain_sf"/>
</dbReference>
<dbReference type="PANTHER" id="PTHR47959">
    <property type="entry name" value="ATP-DEPENDENT RNA HELICASE RHLE-RELATED"/>
    <property type="match status" value="1"/>
</dbReference>
<dbReference type="PANTHER" id="PTHR47959:SF19">
    <property type="entry name" value="NUCLEOLAR RNA HELICASE 2-A"/>
    <property type="match status" value="1"/>
</dbReference>
<dbReference type="Pfam" id="PF00270">
    <property type="entry name" value="DEAD"/>
    <property type="match status" value="1"/>
</dbReference>
<dbReference type="Pfam" id="PF08152">
    <property type="entry name" value="GUCT"/>
    <property type="match status" value="1"/>
</dbReference>
<dbReference type="Pfam" id="PF00271">
    <property type="entry name" value="Helicase_C"/>
    <property type="match status" value="1"/>
</dbReference>
<dbReference type="SMART" id="SM00487">
    <property type="entry name" value="DEXDc"/>
    <property type="match status" value="1"/>
</dbReference>
<dbReference type="SMART" id="SM00490">
    <property type="entry name" value="HELICc"/>
    <property type="match status" value="1"/>
</dbReference>
<dbReference type="SUPFAM" id="SSF52540">
    <property type="entry name" value="P-loop containing nucleoside triphosphate hydrolases"/>
    <property type="match status" value="1"/>
</dbReference>
<dbReference type="SUPFAM" id="SSF54928">
    <property type="entry name" value="RNA-binding domain, RBD"/>
    <property type="match status" value="1"/>
</dbReference>
<dbReference type="PROSITE" id="PS51192">
    <property type="entry name" value="HELICASE_ATP_BIND_1"/>
    <property type="match status" value="1"/>
</dbReference>
<dbReference type="PROSITE" id="PS51194">
    <property type="entry name" value="HELICASE_CTER"/>
    <property type="match status" value="1"/>
</dbReference>
<dbReference type="PROSITE" id="PS51195">
    <property type="entry name" value="Q_MOTIF"/>
    <property type="match status" value="1"/>
</dbReference>
<gene>
    <name type="primary">ddx21-a</name>
</gene>
<organism>
    <name type="scientific">Xenopus laevis</name>
    <name type="common">African clawed frog</name>
    <dbReference type="NCBI Taxonomy" id="8355"/>
    <lineage>
        <taxon>Eukaryota</taxon>
        <taxon>Metazoa</taxon>
        <taxon>Chordata</taxon>
        <taxon>Craniata</taxon>
        <taxon>Vertebrata</taxon>
        <taxon>Euteleostomi</taxon>
        <taxon>Amphibia</taxon>
        <taxon>Batrachia</taxon>
        <taxon>Anura</taxon>
        <taxon>Pipoidea</taxon>
        <taxon>Pipidae</taxon>
        <taxon>Xenopodinae</taxon>
        <taxon>Xenopus</taxon>
        <taxon>Xenopus</taxon>
    </lineage>
</organism>
<evidence type="ECO:0000250" key="1">
    <source>
        <dbReference type="UniProtKB" id="Q9JIK5"/>
    </source>
</evidence>
<evidence type="ECO:0000250" key="2">
    <source>
        <dbReference type="UniProtKB" id="Q9NR30"/>
    </source>
</evidence>
<evidence type="ECO:0000255" key="3">
    <source>
        <dbReference type="PROSITE-ProRule" id="PRU00541"/>
    </source>
</evidence>
<evidence type="ECO:0000255" key="4">
    <source>
        <dbReference type="PROSITE-ProRule" id="PRU00542"/>
    </source>
</evidence>
<evidence type="ECO:0000255" key="5">
    <source>
        <dbReference type="PROSITE-ProRule" id="PRU00552"/>
    </source>
</evidence>
<evidence type="ECO:0000256" key="6">
    <source>
        <dbReference type="SAM" id="MobiDB-lite"/>
    </source>
</evidence>
<evidence type="ECO:0000269" key="7">
    <source>
    </source>
</evidence>
<evidence type="ECO:0000303" key="8">
    <source>
    </source>
</evidence>
<evidence type="ECO:0000305" key="9"/>
<evidence type="ECO:0000305" key="10">
    <source>
    </source>
</evidence>
<evidence type="ECO:0000312" key="11">
    <source>
        <dbReference type="EMBL" id="AAG22819.2"/>
    </source>
</evidence>
<evidence type="ECO:0000312" key="12">
    <source>
        <dbReference type="EMBL" id="AAH73332.1"/>
    </source>
</evidence>
<feature type="chain" id="PRO_0000432388" description="Nucleolar RNA helicase 2-A">
    <location>
        <begin position="1"/>
        <end position="759"/>
    </location>
</feature>
<feature type="domain" description="Helicase ATP-binding" evidence="3">
    <location>
        <begin position="210"/>
        <end position="389"/>
    </location>
</feature>
<feature type="domain" description="Helicase C-terminal" evidence="4">
    <location>
        <begin position="422"/>
        <end position="566"/>
    </location>
</feature>
<feature type="region of interest" description="Disordered" evidence="6">
    <location>
        <begin position="1"/>
        <end position="154"/>
    </location>
</feature>
<feature type="region of interest" description="Disordered" evidence="6">
    <location>
        <begin position="709"/>
        <end position="759"/>
    </location>
</feature>
<feature type="short sequence motif" description="Q motif" evidence="5">
    <location>
        <begin position="179"/>
        <end position="207"/>
    </location>
</feature>
<feature type="short sequence motif" description="DEAD box" evidence="3">
    <location>
        <begin position="332"/>
        <end position="335"/>
    </location>
</feature>
<feature type="compositionally biased region" description="Acidic residues" evidence="6">
    <location>
        <begin position="77"/>
        <end position="86"/>
    </location>
</feature>
<feature type="compositionally biased region" description="Basic and acidic residues" evidence="6">
    <location>
        <begin position="710"/>
        <end position="719"/>
    </location>
</feature>
<feature type="compositionally biased region" description="Basic residues" evidence="6">
    <location>
        <begin position="748"/>
        <end position="759"/>
    </location>
</feature>
<feature type="binding site" evidence="3">
    <location>
        <begin position="223"/>
        <end position="230"/>
    </location>
    <ligand>
        <name>ATP</name>
        <dbReference type="ChEBI" id="CHEBI:30616"/>
    </ligand>
</feature>
<feature type="sequence conflict" description="In Ref. 2; AAH73332." evidence="9" ref="2">
    <original>V</original>
    <variation>I</variation>
    <location>
        <position position="50"/>
    </location>
</feature>
<feature type="sequence conflict" description="In Ref. 2; AAH73332." evidence="9" ref="2">
    <original>S</original>
    <variation>T</variation>
    <location>
        <position position="73"/>
    </location>
</feature>
<feature type="sequence conflict" description="In Ref. 2; AAH73332." evidence="9" ref="2">
    <original>V</original>
    <variation>I</variation>
    <location>
        <position position="128"/>
    </location>
</feature>
<feature type="sequence conflict" description="In Ref. 2; AAH73332." evidence="9" ref="2">
    <original>D</original>
    <variation>E</variation>
    <location>
        <position position="171"/>
    </location>
</feature>
<feature type="sequence conflict" description="In Ref. 2; AAH73332." evidence="9" ref="2">
    <original>D</original>
    <variation>V</variation>
    <location>
        <position position="631"/>
    </location>
</feature>
<protein>
    <recommendedName>
        <fullName evidence="9">Nucleolar RNA helicase 2-A</fullName>
        <ecNumber evidence="2">3.6.4.13</ecNumber>
    </recommendedName>
    <alternativeName>
        <fullName>DEAD box protein 21-A</fullName>
    </alternativeName>
    <alternativeName>
        <fullName>Gu-alpha-A</fullName>
    </alternativeName>
    <alternativeName>
        <fullName evidence="8">Nucleolar RNA helicase Gu-A</fullName>
        <shortName evidence="8">xGu-1</shortName>
    </alternativeName>
    <alternativeName>
        <fullName evidence="8">Nucleolar RNA helicase II-A</fullName>
    </alternativeName>
    <alternativeName>
        <fullName evidence="8">RH II/Gu-A</fullName>
    </alternativeName>
</protein>
<comment type="function">
    <text evidence="2 10">RNA helicase that acts as a sensor of the transcriptional status of both RNA polymerase (Pol) I and II: promotes ribosomal RNA (rRNA) processing and transcription from polymerase II (Pol II) (By similarity). Binds various RNAs, such as rRNAs, snoRNAs, 7SK and, at lower extent, mRNAs (By similarity). In the nucleolus, localizes to rDNA locus, where it directly binds rRNAs and snoRNAs, and promotes rRNA transcription, processing and modification (Probable) (PubMed:12851405). Required for rRNA 2'-O-methylation, possibly by promoting the recruitment of late-acting snoRNAs SNORD56 and SNORD58 with pre-ribosomal complexes (By similarity). In the nucleoplasm, binds 7SK RNA and is recruited to the promoters of Pol II-transcribed genes: acts by facilitating the release of P-TEFb from inhibitory 7SK snRNP in a manner that is dependent on its helicase activity, thereby promoting transcription of its target genes (By similarity). Required to prevent R-loop-associated DNA damage and transcription-associated genomic instability (By similarity).</text>
</comment>
<comment type="catalytic activity">
    <reaction evidence="2">
        <text>ATP + H2O = ADP + phosphate + H(+)</text>
        <dbReference type="Rhea" id="RHEA:13065"/>
        <dbReference type="ChEBI" id="CHEBI:15377"/>
        <dbReference type="ChEBI" id="CHEBI:15378"/>
        <dbReference type="ChEBI" id="CHEBI:30616"/>
        <dbReference type="ChEBI" id="CHEBI:43474"/>
        <dbReference type="ChEBI" id="CHEBI:456216"/>
        <dbReference type="EC" id="3.6.4.13"/>
    </reaction>
    <physiologicalReaction direction="left-to-right" evidence="2">
        <dbReference type="Rhea" id="RHEA:13066"/>
    </physiologicalReaction>
</comment>
<comment type="subcellular location">
    <subcellularLocation>
        <location evidence="7">Nucleus</location>
        <location evidence="7">Nucleolus</location>
    </subcellularLocation>
    <subcellularLocation>
        <location evidence="2">Nucleus</location>
        <location evidence="2">Nucleoplasm</location>
    </subcellularLocation>
    <subcellularLocation>
        <location evidence="1">Cytoplasm</location>
        <location evidence="1">Cytosol</location>
    </subcellularLocation>
    <subcellularLocation>
        <location evidence="1">Mitochondrion</location>
    </subcellularLocation>
</comment>
<comment type="tissue specificity">
    <text evidence="7">Widely expressed. Expressed at higher level in stomach. Expressed at higher level compared to ddx21-b.</text>
</comment>
<comment type="similarity">
    <text evidence="9">Belongs to the DEAD box helicase family. DDX21/DDX50 subfamily.</text>
</comment>
<comment type="sequence caution" evidence="9">
    <conflict type="erroneous initiation">
        <sequence resource="EMBL-CDS" id="AAH73332"/>
    </conflict>
    <text>Truncated N-terminus.</text>
</comment>
<proteinExistence type="evidence at transcript level"/>